<proteinExistence type="inferred from homology"/>
<protein>
    <recommendedName>
        <fullName evidence="1">Guanosine-5'-triphosphate,3'-diphosphate pyrophosphatase</fullName>
        <ecNumber evidence="1">3.6.1.40</ecNumber>
    </recommendedName>
    <alternativeName>
        <fullName evidence="1">Guanosine pentaphosphate phosphohydrolase</fullName>
    </alternativeName>
    <alternativeName>
        <fullName evidence="1">pppGpp-5'-phosphohydrolase</fullName>
    </alternativeName>
</protein>
<organism>
    <name type="scientific">Escherichia coli O127:H6 (strain E2348/69 / EPEC)</name>
    <dbReference type="NCBI Taxonomy" id="574521"/>
    <lineage>
        <taxon>Bacteria</taxon>
        <taxon>Pseudomonadati</taxon>
        <taxon>Pseudomonadota</taxon>
        <taxon>Gammaproteobacteria</taxon>
        <taxon>Enterobacterales</taxon>
        <taxon>Enterobacteriaceae</taxon>
        <taxon>Escherichia</taxon>
    </lineage>
</organism>
<accession>B7UMN4</accession>
<sequence>MGSTSSLYAAIDLGSNSFHMLVVREVAGSIQTLTRIKRKVRLAAGLNSENALSNEAMERGWQCLRLFAERLQDIPPSQIRVVATATLRLAVNAGDFIAKAQEILGCPVQVISGEEEARLIYQGVAHTTGGADQRLVVDIGGASTELVTGTGAQTTSLFSLSMGCVTWLERYFADRNLGQENFDAAEKAAREVLRPVADELRYHGWKVCVGASGTVQALQEIMMAQGMDERITLEKLQQLKQRAIHCGRLEELEIDGLTLERALVFPSGLAILIAIFTELNIQCMTLAGGALREGLVYGMLHLTVEQDIRSRTLRNIQRRFMIDIDQAQRVAKVAANFFDQVENEWHLEAISRDLLISACQLHEIGLSVDFKQAPQHAAYLVRNLDLPGFTPAQKKLLATLLLNQTNPVDLSSLHQQNAVPPRVAEQLCRLLRLAIIFASRRRDDLVPEMTLQANHELLTLTLPQGWLTQHPLGKEIIDQESQWQSYVHWPLEVH</sequence>
<evidence type="ECO:0000255" key="1">
    <source>
        <dbReference type="HAMAP-Rule" id="MF_01550"/>
    </source>
</evidence>
<name>GPPA_ECO27</name>
<gene>
    <name evidence="1" type="primary">gppA</name>
    <name type="ordered locus">E2348C_4079</name>
</gene>
<reference key="1">
    <citation type="journal article" date="2009" name="J. Bacteriol.">
        <title>Complete genome sequence and comparative genome analysis of enteropathogenic Escherichia coli O127:H6 strain E2348/69.</title>
        <authorList>
            <person name="Iguchi A."/>
            <person name="Thomson N.R."/>
            <person name="Ogura Y."/>
            <person name="Saunders D."/>
            <person name="Ooka T."/>
            <person name="Henderson I.R."/>
            <person name="Harris D."/>
            <person name="Asadulghani M."/>
            <person name="Kurokawa K."/>
            <person name="Dean P."/>
            <person name="Kenny B."/>
            <person name="Quail M.A."/>
            <person name="Thurston S."/>
            <person name="Dougan G."/>
            <person name="Hayashi T."/>
            <person name="Parkhill J."/>
            <person name="Frankel G."/>
        </authorList>
    </citation>
    <scope>NUCLEOTIDE SEQUENCE [LARGE SCALE GENOMIC DNA]</scope>
    <source>
        <strain>E2348/69 / EPEC</strain>
    </source>
</reference>
<feature type="chain" id="PRO_1000185312" description="Guanosine-5'-triphosphate,3'-diphosphate pyrophosphatase">
    <location>
        <begin position="1"/>
        <end position="494"/>
    </location>
</feature>
<comment type="function">
    <text evidence="1">Catalyzes the conversion of pppGpp to ppGpp. Guanosine pentaphosphate (pppGpp) is a cytoplasmic signaling molecule which together with ppGpp controls the 'stringent response', an adaptive process that allows bacteria to respond to amino acid starvation, resulting in the coordinated regulation of numerous cellular activities.</text>
</comment>
<comment type="catalytic activity">
    <reaction evidence="1">
        <text>guanosine 3'-diphosphate 5'-triphosphate + H2O = guanosine 3',5'-bis(diphosphate) + phosphate + H(+)</text>
        <dbReference type="Rhea" id="RHEA:13073"/>
        <dbReference type="ChEBI" id="CHEBI:15377"/>
        <dbReference type="ChEBI" id="CHEBI:15378"/>
        <dbReference type="ChEBI" id="CHEBI:43474"/>
        <dbReference type="ChEBI" id="CHEBI:77828"/>
        <dbReference type="ChEBI" id="CHEBI:142410"/>
        <dbReference type="EC" id="3.6.1.40"/>
    </reaction>
</comment>
<comment type="pathway">
    <text evidence="1">Purine metabolism; ppGpp biosynthesis; ppGpp from GTP: step 2/2.</text>
</comment>
<comment type="similarity">
    <text evidence="1">Belongs to the GppA/Ppx family. GppA subfamily.</text>
</comment>
<dbReference type="EC" id="3.6.1.40" evidence="1"/>
<dbReference type="EMBL" id="FM180568">
    <property type="protein sequence ID" value="CAS11627.1"/>
    <property type="molecule type" value="Genomic_DNA"/>
</dbReference>
<dbReference type="RefSeq" id="WP_001314257.1">
    <property type="nucleotide sequence ID" value="NC_011601.1"/>
</dbReference>
<dbReference type="SMR" id="B7UMN4"/>
<dbReference type="KEGG" id="ecg:E2348C_4079"/>
<dbReference type="HOGENOM" id="CLU_025908_4_0_6"/>
<dbReference type="UniPathway" id="UPA00908">
    <property type="reaction ID" value="UER00885"/>
</dbReference>
<dbReference type="Proteomes" id="UP000008205">
    <property type="component" value="Chromosome"/>
</dbReference>
<dbReference type="GO" id="GO:0008894">
    <property type="term" value="F:guanosine-5'-triphosphate,3'-diphosphate diphosphatase activity"/>
    <property type="evidence" value="ECO:0007669"/>
    <property type="project" value="UniProtKB-UniRule"/>
</dbReference>
<dbReference type="GO" id="GO:0015974">
    <property type="term" value="P:guanosine pentaphosphate catabolic process"/>
    <property type="evidence" value="ECO:0007669"/>
    <property type="project" value="InterPro"/>
</dbReference>
<dbReference type="GO" id="GO:0015970">
    <property type="term" value="P:guanosine tetraphosphate biosynthetic process"/>
    <property type="evidence" value="ECO:0007669"/>
    <property type="project" value="UniProtKB-UniRule"/>
</dbReference>
<dbReference type="GO" id="GO:0015949">
    <property type="term" value="P:nucleobase-containing small molecule interconversion"/>
    <property type="evidence" value="ECO:0007669"/>
    <property type="project" value="TreeGrafter"/>
</dbReference>
<dbReference type="CDD" id="cd24117">
    <property type="entry name" value="ASKHA_NBD_EcGppA-like"/>
    <property type="match status" value="1"/>
</dbReference>
<dbReference type="FunFam" id="1.10.3210.10:FF:000004">
    <property type="entry name" value="Guanosine-5'-triphosphate,3'-diphosphate pyrophosphatase"/>
    <property type="match status" value="1"/>
</dbReference>
<dbReference type="FunFam" id="3.30.420.150:FF:000001">
    <property type="entry name" value="Guanosine-5'-triphosphate,3'-diphosphate pyrophosphatase"/>
    <property type="match status" value="1"/>
</dbReference>
<dbReference type="FunFam" id="3.30.420.40:FF:000023">
    <property type="entry name" value="Guanosine-5'-triphosphate,3'-diphosphate pyrophosphatase"/>
    <property type="match status" value="1"/>
</dbReference>
<dbReference type="Gene3D" id="3.30.420.40">
    <property type="match status" value="1"/>
</dbReference>
<dbReference type="Gene3D" id="3.30.420.150">
    <property type="entry name" value="Exopolyphosphatase. Domain 2"/>
    <property type="match status" value="1"/>
</dbReference>
<dbReference type="Gene3D" id="1.10.3210.10">
    <property type="entry name" value="Hypothetical protein af1432"/>
    <property type="match status" value="1"/>
</dbReference>
<dbReference type="HAMAP" id="MF_01550">
    <property type="entry name" value="GppA"/>
    <property type="match status" value="1"/>
</dbReference>
<dbReference type="InterPro" id="IPR043129">
    <property type="entry name" value="ATPase_NBD"/>
</dbReference>
<dbReference type="InterPro" id="IPR050273">
    <property type="entry name" value="GppA/Ppx_hydrolase"/>
</dbReference>
<dbReference type="InterPro" id="IPR023709">
    <property type="entry name" value="Guo-5TP_3DP_PyrP"/>
</dbReference>
<dbReference type="InterPro" id="IPR048950">
    <property type="entry name" value="Ppx_GppA_C"/>
</dbReference>
<dbReference type="InterPro" id="IPR003695">
    <property type="entry name" value="Ppx_GppA_N"/>
</dbReference>
<dbReference type="InterPro" id="IPR030673">
    <property type="entry name" value="PyroPPase_GppA_Ppx"/>
</dbReference>
<dbReference type="NCBIfam" id="NF008260">
    <property type="entry name" value="PRK11031.1"/>
    <property type="match status" value="1"/>
</dbReference>
<dbReference type="PANTHER" id="PTHR30005">
    <property type="entry name" value="EXOPOLYPHOSPHATASE"/>
    <property type="match status" value="1"/>
</dbReference>
<dbReference type="PANTHER" id="PTHR30005:SF0">
    <property type="entry name" value="RETROGRADE REGULATION PROTEIN 2"/>
    <property type="match status" value="1"/>
</dbReference>
<dbReference type="Pfam" id="PF02541">
    <property type="entry name" value="Ppx-GppA"/>
    <property type="match status" value="1"/>
</dbReference>
<dbReference type="Pfam" id="PF21447">
    <property type="entry name" value="Ppx-GppA_III"/>
    <property type="match status" value="1"/>
</dbReference>
<dbReference type="PIRSF" id="PIRSF001267">
    <property type="entry name" value="Pyrophosphatase_GppA_Ppx"/>
    <property type="match status" value="1"/>
</dbReference>
<dbReference type="SUPFAM" id="SSF53067">
    <property type="entry name" value="Actin-like ATPase domain"/>
    <property type="match status" value="2"/>
</dbReference>
<dbReference type="SUPFAM" id="SSF109604">
    <property type="entry name" value="HD-domain/PDEase-like"/>
    <property type="match status" value="1"/>
</dbReference>
<keyword id="KW-0378">Hydrolase</keyword>
<keyword id="KW-1185">Reference proteome</keyword>